<sequence length="376" mass="42866">MKDVPGFLQQSQSSGPGQAAVWHRLEELYTKKLWHQLTLQVLDFVQDPCFAQGDGLIKLYENFISEFEHRVNPLSLVEIILHVVRQMTDPNVALSFLEKTREKVKSSDEAVILCKTAIGALKLNIGDLQVTKETIEDVEEMLSNLPGVTSVHSRFYDLSSKYYQTIGNHASYYKDALRFLGCVDIKDLPVSEQQERAFTLGLAGLLGDGVFNFGELLMHPVLESLRDTDRQWLIDTLYAFNSGNVERFQTLKTAWGQQPDLAANEAQLLRKIQLLCLMEMTFTRPANHRQLTFEEIARSAKITVNEVELLVMKALSVGLVKGSIDEVDKRVHMTWVQPRVLDLQQIKGMKDRLEFWCTDVKSMEMLVEHQAHDILT</sequence>
<dbReference type="EMBL" id="BT021056">
    <property type="protein sequence ID" value="AAX09073.1"/>
    <property type="molecule type" value="mRNA"/>
</dbReference>
<dbReference type="EMBL" id="BC102200">
    <property type="protein sequence ID" value="AAI02201.1"/>
    <property type="molecule type" value="mRNA"/>
</dbReference>
<dbReference type="RefSeq" id="NP_001019703.1">
    <property type="nucleotide sequence ID" value="NM_001024532.2"/>
</dbReference>
<dbReference type="SMR" id="Q5E964"/>
<dbReference type="FunCoup" id="Q5E964">
    <property type="interactions" value="4639"/>
</dbReference>
<dbReference type="STRING" id="9913.ENSBTAP00000002650"/>
<dbReference type="PaxDb" id="9913-ENSBTAP00000002650"/>
<dbReference type="PeptideAtlas" id="Q5E964"/>
<dbReference type="GeneID" id="513525"/>
<dbReference type="KEGG" id="bta:513525"/>
<dbReference type="CTD" id="5719"/>
<dbReference type="VEuPathDB" id="HostDB:ENSBTAG00000002045"/>
<dbReference type="eggNOG" id="KOG2908">
    <property type="taxonomic scope" value="Eukaryota"/>
</dbReference>
<dbReference type="InParanoid" id="Q5E964"/>
<dbReference type="OMA" id="SFEDYWE"/>
<dbReference type="OrthoDB" id="1093at2759"/>
<dbReference type="Reactome" id="R-BTA-1169091">
    <property type="pathway name" value="Activation of NF-kappaB in B cells"/>
</dbReference>
<dbReference type="Reactome" id="R-BTA-1234176">
    <property type="pathway name" value="Oxygen-dependent proline hydroxylation of Hypoxia-inducible Factor Alpha"/>
</dbReference>
<dbReference type="Reactome" id="R-BTA-1236978">
    <property type="pathway name" value="Cross-presentation of soluble exogenous antigens (endosomes)"/>
</dbReference>
<dbReference type="Reactome" id="R-BTA-174084">
    <property type="pathway name" value="Autodegradation of Cdh1 by Cdh1:APC/C"/>
</dbReference>
<dbReference type="Reactome" id="R-BTA-174154">
    <property type="pathway name" value="APC/C:Cdc20 mediated degradation of Securin"/>
</dbReference>
<dbReference type="Reactome" id="R-BTA-174178">
    <property type="pathway name" value="APC/C:Cdh1 mediated degradation of Cdc20 and other APC/C:Cdh1 targeted proteins in late mitosis/early G1"/>
</dbReference>
<dbReference type="Reactome" id="R-BTA-174184">
    <property type="pathway name" value="Cdc20:Phospho-APC/C mediated degradation of Cyclin A"/>
</dbReference>
<dbReference type="Reactome" id="R-BTA-187577">
    <property type="pathway name" value="SCF(Skp2)-mediated degradation of p27/p21"/>
</dbReference>
<dbReference type="Reactome" id="R-BTA-195253">
    <property type="pathway name" value="Degradation of beta-catenin by the destruction complex"/>
</dbReference>
<dbReference type="Reactome" id="R-BTA-202424">
    <property type="pathway name" value="Downstream TCR signaling"/>
</dbReference>
<dbReference type="Reactome" id="R-BTA-2467813">
    <property type="pathway name" value="Separation of Sister Chromatids"/>
</dbReference>
<dbReference type="Reactome" id="R-BTA-2871837">
    <property type="pathway name" value="FCERI mediated NF-kB activation"/>
</dbReference>
<dbReference type="Reactome" id="R-BTA-349425">
    <property type="pathway name" value="Autodegradation of the E3 ubiquitin ligase COP1"/>
</dbReference>
<dbReference type="Reactome" id="R-BTA-350562">
    <property type="pathway name" value="Regulation of ornithine decarboxylase (ODC)"/>
</dbReference>
<dbReference type="Reactome" id="R-BTA-382556">
    <property type="pathway name" value="ABC-family proteins mediated transport"/>
</dbReference>
<dbReference type="Reactome" id="R-BTA-450408">
    <property type="pathway name" value="AUF1 (hnRNP D0) binds and destabilizes mRNA"/>
</dbReference>
<dbReference type="Reactome" id="R-BTA-4608870">
    <property type="pathway name" value="Asymmetric localization of PCP proteins"/>
</dbReference>
<dbReference type="Reactome" id="R-BTA-4641257">
    <property type="pathway name" value="Degradation of AXIN"/>
</dbReference>
<dbReference type="Reactome" id="R-BTA-4641258">
    <property type="pathway name" value="Degradation of DVL"/>
</dbReference>
<dbReference type="Reactome" id="R-BTA-5358346">
    <property type="pathway name" value="Hedgehog ligand biogenesis"/>
</dbReference>
<dbReference type="Reactome" id="R-BTA-5607761">
    <property type="pathway name" value="Dectin-1 mediated noncanonical NF-kB signaling"/>
</dbReference>
<dbReference type="Reactome" id="R-BTA-5607764">
    <property type="pathway name" value="CLEC7A (Dectin-1) signaling"/>
</dbReference>
<dbReference type="Reactome" id="R-BTA-5610780">
    <property type="pathway name" value="Degradation of GLI1 by the proteasome"/>
</dbReference>
<dbReference type="Reactome" id="R-BTA-5610785">
    <property type="pathway name" value="GLI3 is processed to GLI3R by the proteasome"/>
</dbReference>
<dbReference type="Reactome" id="R-BTA-5632684">
    <property type="pathway name" value="Hedgehog 'on' state"/>
</dbReference>
<dbReference type="Reactome" id="R-BTA-5668541">
    <property type="pathway name" value="TNFR2 non-canonical NF-kB pathway"/>
</dbReference>
<dbReference type="Reactome" id="R-BTA-5676590">
    <property type="pathway name" value="NIK--&gt;noncanonical NF-kB signaling"/>
</dbReference>
<dbReference type="Reactome" id="R-BTA-5687128">
    <property type="pathway name" value="MAPK6/MAPK4 signaling"/>
</dbReference>
<dbReference type="Reactome" id="R-BTA-5689603">
    <property type="pathway name" value="UCH proteinases"/>
</dbReference>
<dbReference type="Reactome" id="R-BTA-5689880">
    <property type="pathway name" value="Ub-specific processing proteases"/>
</dbReference>
<dbReference type="Reactome" id="R-BTA-6798695">
    <property type="pathway name" value="Neutrophil degranulation"/>
</dbReference>
<dbReference type="Reactome" id="R-BTA-68867">
    <property type="pathway name" value="Assembly of the pre-replicative complex"/>
</dbReference>
<dbReference type="Reactome" id="R-BTA-68949">
    <property type="pathway name" value="Orc1 removal from chromatin"/>
</dbReference>
<dbReference type="Reactome" id="R-BTA-69017">
    <property type="pathway name" value="CDK-mediated phosphorylation and removal of Cdc6"/>
</dbReference>
<dbReference type="Reactome" id="R-BTA-69481">
    <property type="pathway name" value="G2/M Checkpoints"/>
</dbReference>
<dbReference type="Reactome" id="R-BTA-69601">
    <property type="pathway name" value="Ubiquitin Mediated Degradation of Phosphorylated Cdc25A"/>
</dbReference>
<dbReference type="Reactome" id="R-BTA-75815">
    <property type="pathway name" value="Ubiquitin-dependent degradation of Cyclin D"/>
</dbReference>
<dbReference type="Reactome" id="R-BTA-8852276">
    <property type="pathway name" value="The role of GTSE1 in G2/M progression after G2 checkpoint"/>
</dbReference>
<dbReference type="Reactome" id="R-BTA-8854050">
    <property type="pathway name" value="FBXL7 down-regulates AURKA during mitotic entry and in early mitosis"/>
</dbReference>
<dbReference type="Reactome" id="R-BTA-8939236">
    <property type="pathway name" value="RUNX1 regulates transcription of genes involved in differentiation of HSCs"/>
</dbReference>
<dbReference type="Reactome" id="R-BTA-8939902">
    <property type="pathway name" value="Regulation of RUNX2 expression and activity"/>
</dbReference>
<dbReference type="Reactome" id="R-BTA-8941858">
    <property type="pathway name" value="Regulation of RUNX3 expression and activity"/>
</dbReference>
<dbReference type="Reactome" id="R-BTA-8948751">
    <property type="pathway name" value="Regulation of PTEN stability and activity"/>
</dbReference>
<dbReference type="Reactome" id="R-BTA-8951664">
    <property type="pathway name" value="Neddylation"/>
</dbReference>
<dbReference type="Reactome" id="R-BTA-9020702">
    <property type="pathway name" value="Interleukin-1 signaling"/>
</dbReference>
<dbReference type="Reactome" id="R-BTA-9755511">
    <property type="pathway name" value="KEAP1-NFE2L2 pathway"/>
</dbReference>
<dbReference type="Reactome" id="R-BTA-9762114">
    <property type="pathway name" value="GSK3B and BTRC:CUL1-mediated-degradation of NFE2L2"/>
</dbReference>
<dbReference type="Reactome" id="R-BTA-983168">
    <property type="pathway name" value="Antigen processing: Ubiquitination &amp; Proteasome degradation"/>
</dbReference>
<dbReference type="Reactome" id="R-BTA-9907900">
    <property type="pathway name" value="Proteasome assembly"/>
</dbReference>
<dbReference type="Proteomes" id="UP000009136">
    <property type="component" value="Chromosome 11"/>
</dbReference>
<dbReference type="Bgee" id="ENSBTAG00000002045">
    <property type="expression patterns" value="Expressed in choroid plexus and 105 other cell types or tissues"/>
</dbReference>
<dbReference type="GO" id="GO:0005829">
    <property type="term" value="C:cytosol"/>
    <property type="evidence" value="ECO:0000318"/>
    <property type="project" value="GO_Central"/>
</dbReference>
<dbReference type="GO" id="GO:0005634">
    <property type="term" value="C:nucleus"/>
    <property type="evidence" value="ECO:0000318"/>
    <property type="project" value="GO_Central"/>
</dbReference>
<dbReference type="GO" id="GO:0022624">
    <property type="term" value="C:proteasome accessory complex"/>
    <property type="evidence" value="ECO:0000250"/>
    <property type="project" value="UniProtKB"/>
</dbReference>
<dbReference type="GO" id="GO:0008541">
    <property type="term" value="C:proteasome regulatory particle, lid subcomplex"/>
    <property type="evidence" value="ECO:0000318"/>
    <property type="project" value="GO_Central"/>
</dbReference>
<dbReference type="GO" id="GO:0005198">
    <property type="term" value="F:structural molecule activity"/>
    <property type="evidence" value="ECO:0000318"/>
    <property type="project" value="GO_Central"/>
</dbReference>
<dbReference type="GO" id="GO:0007127">
    <property type="term" value="P:meiosis I"/>
    <property type="evidence" value="ECO:0007669"/>
    <property type="project" value="Ensembl"/>
</dbReference>
<dbReference type="GO" id="GO:0006511">
    <property type="term" value="P:ubiquitin-dependent protein catabolic process"/>
    <property type="evidence" value="ECO:0000318"/>
    <property type="project" value="GO_Central"/>
</dbReference>
<dbReference type="InterPro" id="IPR000717">
    <property type="entry name" value="PCI_dom"/>
</dbReference>
<dbReference type="InterPro" id="IPR054179">
    <property type="entry name" value="PSD13_N"/>
</dbReference>
<dbReference type="InterPro" id="IPR035298">
    <property type="entry name" value="PSMD13"/>
</dbReference>
<dbReference type="InterPro" id="IPR036390">
    <property type="entry name" value="WH_DNA-bd_sf"/>
</dbReference>
<dbReference type="PANTHER" id="PTHR10539">
    <property type="entry name" value="26S PROTEASOME NON-ATPASE REGULATORY SUBUNIT 13"/>
    <property type="match status" value="1"/>
</dbReference>
<dbReference type="PANTHER" id="PTHR10539:SF0">
    <property type="entry name" value="26S PROTEASOME NON-ATPASE REGULATORY SUBUNIT 13"/>
    <property type="match status" value="1"/>
</dbReference>
<dbReference type="Pfam" id="PF01399">
    <property type="entry name" value="PCI"/>
    <property type="match status" value="1"/>
</dbReference>
<dbReference type="Pfam" id="PF22037">
    <property type="entry name" value="PSD13_N"/>
    <property type="match status" value="1"/>
</dbReference>
<dbReference type="SMART" id="SM00088">
    <property type="entry name" value="PINT"/>
    <property type="match status" value="1"/>
</dbReference>
<dbReference type="SUPFAM" id="SSF46785">
    <property type="entry name" value="Winged helix' DNA-binding domain"/>
    <property type="match status" value="1"/>
</dbReference>
<dbReference type="PROSITE" id="PS50250">
    <property type="entry name" value="PCI"/>
    <property type="match status" value="1"/>
</dbReference>
<evidence type="ECO:0000250" key="1">
    <source>
        <dbReference type="UniProtKB" id="Q9UNM6"/>
    </source>
</evidence>
<evidence type="ECO:0000255" key="2">
    <source>
        <dbReference type="PROSITE-ProRule" id="PRU01185"/>
    </source>
</evidence>
<evidence type="ECO:0000305" key="3"/>
<gene>
    <name type="primary">PSMD13</name>
</gene>
<comment type="function">
    <text evidence="1">Component of the 26S proteasome, a multiprotein complex involved in the ATP-dependent degradation of ubiquitinated proteins. This complex plays a key role in the maintenance of protein homeostasis by removing misfolded or damaged proteins, which could impair cellular functions, and by removing proteins whose functions are no longer required. Therefore, the proteasome participates in numerous cellular processes, including cell cycle progression, apoptosis, or DNA damage repair.</text>
</comment>
<comment type="subunit">
    <text evidence="1">Component of the 19S proteasome regulatory particle complex. The 26S proteasome consists of a 20S core particle (CP) and two 19S regulatory subunits (RP). The regulatory particle is made of a lid composed of 9 subunits including PSMD13, a base containing 6 ATPases and few additional components.</text>
</comment>
<comment type="similarity">
    <text evidence="3">Belongs to the proteasome subunit S11 family.</text>
</comment>
<keyword id="KW-0647">Proteasome</keyword>
<keyword id="KW-1185">Reference proteome</keyword>
<accession>Q5E964</accession>
<accession>Q3T0Z1</accession>
<name>PSD13_BOVIN</name>
<feature type="chain" id="PRO_0000173866" description="26S proteasome non-ATPase regulatory subunit 13">
    <location>
        <begin position="1"/>
        <end position="376"/>
    </location>
</feature>
<feature type="domain" description="PCI" evidence="2">
    <location>
        <begin position="171"/>
        <end position="338"/>
    </location>
</feature>
<protein>
    <recommendedName>
        <fullName>26S proteasome non-ATPase regulatory subunit 13</fullName>
    </recommendedName>
    <alternativeName>
        <fullName>26S proteasome regulatory subunit RPN9</fullName>
    </alternativeName>
    <alternativeName>
        <fullName>26S proteasome regulatory subunit S11</fullName>
    </alternativeName>
    <alternativeName>
        <fullName>26S proteasome regulatory subunit p40.5</fullName>
    </alternativeName>
</protein>
<organism>
    <name type="scientific">Bos taurus</name>
    <name type="common">Bovine</name>
    <dbReference type="NCBI Taxonomy" id="9913"/>
    <lineage>
        <taxon>Eukaryota</taxon>
        <taxon>Metazoa</taxon>
        <taxon>Chordata</taxon>
        <taxon>Craniata</taxon>
        <taxon>Vertebrata</taxon>
        <taxon>Euteleostomi</taxon>
        <taxon>Mammalia</taxon>
        <taxon>Eutheria</taxon>
        <taxon>Laurasiatheria</taxon>
        <taxon>Artiodactyla</taxon>
        <taxon>Ruminantia</taxon>
        <taxon>Pecora</taxon>
        <taxon>Bovidae</taxon>
        <taxon>Bovinae</taxon>
        <taxon>Bos</taxon>
    </lineage>
</organism>
<reference key="1">
    <citation type="journal article" date="2005" name="BMC Genomics">
        <title>Characterization of 954 bovine full-CDS cDNA sequences.</title>
        <authorList>
            <person name="Harhay G.P."/>
            <person name="Sonstegard T.S."/>
            <person name="Keele J.W."/>
            <person name="Heaton M.P."/>
            <person name="Clawson M.L."/>
            <person name="Snelling W.M."/>
            <person name="Wiedmann R.T."/>
            <person name="Van Tassell C.P."/>
            <person name="Smith T.P.L."/>
        </authorList>
    </citation>
    <scope>NUCLEOTIDE SEQUENCE [LARGE SCALE MRNA]</scope>
</reference>
<reference key="2">
    <citation type="submission" date="2005-08" db="EMBL/GenBank/DDBJ databases">
        <authorList>
            <consortium name="NIH - Mammalian Gene Collection (MGC) project"/>
        </authorList>
    </citation>
    <scope>NUCLEOTIDE SEQUENCE [LARGE SCALE MRNA]</scope>
    <source>
        <strain>Crossbred X Angus</strain>
        <tissue>Ileum</tissue>
    </source>
</reference>
<proteinExistence type="evidence at transcript level"/>